<proteinExistence type="inferred from homology"/>
<name>RUTD_ECO45</name>
<comment type="function">
    <text evidence="1">Involved in pyrimidine catabolism. May facilitate the hydrolysis of carbamate, a reaction that can also occur spontaneously.</text>
</comment>
<comment type="catalytic activity">
    <reaction evidence="1">
        <text>carbamate + 2 H(+) = NH4(+) + CO2</text>
        <dbReference type="Rhea" id="RHEA:15649"/>
        <dbReference type="ChEBI" id="CHEBI:13941"/>
        <dbReference type="ChEBI" id="CHEBI:15378"/>
        <dbReference type="ChEBI" id="CHEBI:16526"/>
        <dbReference type="ChEBI" id="CHEBI:28938"/>
    </reaction>
</comment>
<comment type="similarity">
    <text evidence="1">Belongs to the AB hydrolase superfamily. Hydrolase RutD family.</text>
</comment>
<dbReference type="EC" id="3.5.1.-" evidence="1"/>
<dbReference type="EMBL" id="CU928161">
    <property type="protein sequence ID" value="CAR02356.1"/>
    <property type="molecule type" value="Genomic_DNA"/>
</dbReference>
<dbReference type="RefSeq" id="WP_001331944.1">
    <property type="nucleotide sequence ID" value="NC_011742.1"/>
</dbReference>
<dbReference type="SMR" id="B7MIF6"/>
<dbReference type="ESTHER" id="ecoli-rutD">
    <property type="family name" value="RutD"/>
</dbReference>
<dbReference type="KEGG" id="ecz:ECS88_1025"/>
<dbReference type="HOGENOM" id="CLU_020336_50_1_6"/>
<dbReference type="Proteomes" id="UP000000747">
    <property type="component" value="Chromosome"/>
</dbReference>
<dbReference type="GO" id="GO:0016020">
    <property type="term" value="C:membrane"/>
    <property type="evidence" value="ECO:0007669"/>
    <property type="project" value="TreeGrafter"/>
</dbReference>
<dbReference type="GO" id="GO:0016811">
    <property type="term" value="F:hydrolase activity, acting on carbon-nitrogen (but not peptide) bonds, in linear amides"/>
    <property type="evidence" value="ECO:0007669"/>
    <property type="project" value="InterPro"/>
</dbReference>
<dbReference type="GO" id="GO:0019740">
    <property type="term" value="P:nitrogen utilization"/>
    <property type="evidence" value="ECO:0007669"/>
    <property type="project" value="UniProtKB-UniRule"/>
</dbReference>
<dbReference type="GO" id="GO:0006212">
    <property type="term" value="P:uracil catabolic process"/>
    <property type="evidence" value="ECO:0007669"/>
    <property type="project" value="UniProtKB-UniRule"/>
</dbReference>
<dbReference type="FunFam" id="3.40.50.1820:FF:000052">
    <property type="entry name" value="Putative aminoacrylate hydrolase RutD"/>
    <property type="match status" value="1"/>
</dbReference>
<dbReference type="Gene3D" id="3.40.50.1820">
    <property type="entry name" value="alpha/beta hydrolase"/>
    <property type="match status" value="1"/>
</dbReference>
<dbReference type="HAMAP" id="MF_00832">
    <property type="entry name" value="RutD"/>
    <property type="match status" value="1"/>
</dbReference>
<dbReference type="InterPro" id="IPR000073">
    <property type="entry name" value="AB_hydrolase_1"/>
</dbReference>
<dbReference type="InterPro" id="IPR029058">
    <property type="entry name" value="AB_hydrolase_fold"/>
</dbReference>
<dbReference type="InterPro" id="IPR050266">
    <property type="entry name" value="AB_hydrolase_sf"/>
</dbReference>
<dbReference type="InterPro" id="IPR019913">
    <property type="entry name" value="Pyrimidine_utilisation_RutD"/>
</dbReference>
<dbReference type="NCBIfam" id="TIGR03611">
    <property type="entry name" value="RutD"/>
    <property type="match status" value="1"/>
</dbReference>
<dbReference type="PANTHER" id="PTHR43798:SF27">
    <property type="entry name" value="HYDROLASE ALPHA_BETA HYDROLASE FOLD FAMILY"/>
    <property type="match status" value="1"/>
</dbReference>
<dbReference type="PANTHER" id="PTHR43798">
    <property type="entry name" value="MONOACYLGLYCEROL LIPASE"/>
    <property type="match status" value="1"/>
</dbReference>
<dbReference type="Pfam" id="PF00561">
    <property type="entry name" value="Abhydrolase_1"/>
    <property type="match status" value="1"/>
</dbReference>
<dbReference type="PRINTS" id="PR00111">
    <property type="entry name" value="ABHYDROLASE"/>
</dbReference>
<dbReference type="SUPFAM" id="SSF53474">
    <property type="entry name" value="alpha/beta-Hydrolases"/>
    <property type="match status" value="1"/>
</dbReference>
<organism>
    <name type="scientific">Escherichia coli O45:K1 (strain S88 / ExPEC)</name>
    <dbReference type="NCBI Taxonomy" id="585035"/>
    <lineage>
        <taxon>Bacteria</taxon>
        <taxon>Pseudomonadati</taxon>
        <taxon>Pseudomonadota</taxon>
        <taxon>Gammaproteobacteria</taxon>
        <taxon>Enterobacterales</taxon>
        <taxon>Enterobacteriaceae</taxon>
        <taxon>Escherichia</taxon>
    </lineage>
</organism>
<evidence type="ECO:0000255" key="1">
    <source>
        <dbReference type="HAMAP-Rule" id="MF_00832"/>
    </source>
</evidence>
<feature type="chain" id="PRO_0000402959" description="Putative carbamate hydrolase RutD">
    <location>
        <begin position="1"/>
        <end position="266"/>
    </location>
</feature>
<accession>B7MIF6</accession>
<protein>
    <recommendedName>
        <fullName evidence="1">Putative carbamate hydrolase RutD</fullName>
        <ecNumber evidence="1">3.5.1.-</ecNumber>
    </recommendedName>
    <alternativeName>
        <fullName evidence="1">Aminohydrolase</fullName>
    </alternativeName>
</protein>
<reference key="1">
    <citation type="journal article" date="2009" name="PLoS Genet.">
        <title>Organised genome dynamics in the Escherichia coli species results in highly diverse adaptive paths.</title>
        <authorList>
            <person name="Touchon M."/>
            <person name="Hoede C."/>
            <person name="Tenaillon O."/>
            <person name="Barbe V."/>
            <person name="Baeriswyl S."/>
            <person name="Bidet P."/>
            <person name="Bingen E."/>
            <person name="Bonacorsi S."/>
            <person name="Bouchier C."/>
            <person name="Bouvet O."/>
            <person name="Calteau A."/>
            <person name="Chiapello H."/>
            <person name="Clermont O."/>
            <person name="Cruveiller S."/>
            <person name="Danchin A."/>
            <person name="Diard M."/>
            <person name="Dossat C."/>
            <person name="Karoui M.E."/>
            <person name="Frapy E."/>
            <person name="Garry L."/>
            <person name="Ghigo J.M."/>
            <person name="Gilles A.M."/>
            <person name="Johnson J."/>
            <person name="Le Bouguenec C."/>
            <person name="Lescat M."/>
            <person name="Mangenot S."/>
            <person name="Martinez-Jehanne V."/>
            <person name="Matic I."/>
            <person name="Nassif X."/>
            <person name="Oztas S."/>
            <person name="Petit M.A."/>
            <person name="Pichon C."/>
            <person name="Rouy Z."/>
            <person name="Ruf C.S."/>
            <person name="Schneider D."/>
            <person name="Tourret J."/>
            <person name="Vacherie B."/>
            <person name="Vallenet D."/>
            <person name="Medigue C."/>
            <person name="Rocha E.P.C."/>
            <person name="Denamur E."/>
        </authorList>
    </citation>
    <scope>NUCLEOTIDE SEQUENCE [LARGE SCALE GENOMIC DNA]</scope>
    <source>
        <strain>S88 / ExPEC</strain>
    </source>
</reference>
<gene>
    <name evidence="1" type="primary">rutD</name>
    <name type="ordered locus">ECS88_1025</name>
</gene>
<sequence length="266" mass="28878">MKLSLSPPPYADAPVVVLISGLGGSGSYWLPQLAVLVQEYQVVCYDQRGTGNNPDTLAEDYSIAQMAAELHQALVAAGIERYAVVGHALGALVGMQLALDYPASVTVLVSVNGWLRINAHTRRCFQVREQLLHSGGAQAWVEAQPLFLYPADWMAARAPRLEAEDALALAHFQGKNNLLRRLNALKRADFSHHADRIRCPVQIICASDDLLVPTACSSELHAALPDSQKMVMRYGGHACNVTDPETFNALLLNGLASLLHHREAAL</sequence>
<keyword id="KW-0378">Hydrolase</keyword>
<keyword id="KW-1185">Reference proteome</keyword>